<protein>
    <recommendedName>
        <fullName evidence="1">Gamma-glutamyl phosphate reductase</fullName>
        <shortName evidence="1">GPR</shortName>
        <ecNumber evidence="1">1.2.1.41</ecNumber>
    </recommendedName>
    <alternativeName>
        <fullName evidence="1">Glutamate-5-semialdehyde dehydrogenase</fullName>
    </alternativeName>
    <alternativeName>
        <fullName evidence="1">Glutamyl-gamma-semialdehyde dehydrogenase</fullName>
        <shortName evidence="1">GSA dehydrogenase</shortName>
    </alternativeName>
</protein>
<accession>A4IPN4</accession>
<organism>
    <name type="scientific">Geobacillus thermodenitrificans (strain NG80-2)</name>
    <dbReference type="NCBI Taxonomy" id="420246"/>
    <lineage>
        <taxon>Bacteria</taxon>
        <taxon>Bacillati</taxon>
        <taxon>Bacillota</taxon>
        <taxon>Bacilli</taxon>
        <taxon>Bacillales</taxon>
        <taxon>Anoxybacillaceae</taxon>
        <taxon>Geobacillus</taxon>
    </lineage>
</organism>
<sequence>MNELLEKAERLKTASQTLAMLSTEEKNAALEQIAKAIDRKRAVILAENEKDMAAGRSQGLSPALLDRLQLTNERIDQIISGVRQVASLPDPVGDIIEEWTRPNGLRIQTVRVPLGVIGMVYEARPNVTVDAVSLCLKTGNAVLLRGSSSALHSNKALVSVMKEALRTTAIPETAIELLEDTSRETAQRMFRLNDYLDVLIPRGGAGLIRSVVENATVPVLETGVGNCHIFVDESAERSMAIDIVLNAKLQRPSVCNAIETVLIHERWPYVGELLEALHARGVELRGDRRLAAAYPFVTEATEEDWHTEYLAPILAIKLVTDVDEAIQHIHRYGTKHSEAIITENEAHVRRFFQAVDAAVLYHNASTRFTDGEQFGYGAEIGISTQKLHARGPMGLVAITTTKSLVYGTGQIRTV</sequence>
<reference key="1">
    <citation type="journal article" date="2007" name="Proc. Natl. Acad. Sci. U.S.A.">
        <title>Genome and proteome of long-chain alkane degrading Geobacillus thermodenitrificans NG80-2 isolated from a deep-subsurface oil reservoir.</title>
        <authorList>
            <person name="Feng L."/>
            <person name="Wang W."/>
            <person name="Cheng J."/>
            <person name="Ren Y."/>
            <person name="Zhao G."/>
            <person name="Gao C."/>
            <person name="Tang Y."/>
            <person name="Liu X."/>
            <person name="Han W."/>
            <person name="Peng X."/>
            <person name="Liu R."/>
            <person name="Wang L."/>
        </authorList>
    </citation>
    <scope>NUCLEOTIDE SEQUENCE [LARGE SCALE GENOMIC DNA]</scope>
    <source>
        <strain>NG80-2</strain>
    </source>
</reference>
<keyword id="KW-0028">Amino-acid biosynthesis</keyword>
<keyword id="KW-0963">Cytoplasm</keyword>
<keyword id="KW-0521">NADP</keyword>
<keyword id="KW-0560">Oxidoreductase</keyword>
<keyword id="KW-0641">Proline biosynthesis</keyword>
<gene>
    <name evidence="1" type="primary">proA</name>
    <name type="ordered locus">GTNG_1933</name>
</gene>
<comment type="function">
    <text evidence="1">Catalyzes the NADPH-dependent reduction of L-glutamate 5-phosphate into L-glutamate 5-semialdehyde and phosphate. The product spontaneously undergoes cyclization to form 1-pyrroline-5-carboxylate.</text>
</comment>
<comment type="catalytic activity">
    <reaction evidence="1">
        <text>L-glutamate 5-semialdehyde + phosphate + NADP(+) = L-glutamyl 5-phosphate + NADPH + H(+)</text>
        <dbReference type="Rhea" id="RHEA:19541"/>
        <dbReference type="ChEBI" id="CHEBI:15378"/>
        <dbReference type="ChEBI" id="CHEBI:43474"/>
        <dbReference type="ChEBI" id="CHEBI:57783"/>
        <dbReference type="ChEBI" id="CHEBI:58066"/>
        <dbReference type="ChEBI" id="CHEBI:58274"/>
        <dbReference type="ChEBI" id="CHEBI:58349"/>
        <dbReference type="EC" id="1.2.1.41"/>
    </reaction>
</comment>
<comment type="pathway">
    <text evidence="1">Amino-acid biosynthesis; L-proline biosynthesis; L-glutamate 5-semialdehyde from L-glutamate: step 2/2.</text>
</comment>
<comment type="subcellular location">
    <subcellularLocation>
        <location evidence="1">Cytoplasm</location>
    </subcellularLocation>
</comment>
<comment type="similarity">
    <text evidence="1">Belongs to the gamma-glutamyl phosphate reductase family.</text>
</comment>
<dbReference type="EC" id="1.2.1.41" evidence="1"/>
<dbReference type="EMBL" id="CP000557">
    <property type="protein sequence ID" value="ABO67288.1"/>
    <property type="molecule type" value="Genomic_DNA"/>
</dbReference>
<dbReference type="RefSeq" id="WP_008880594.1">
    <property type="nucleotide sequence ID" value="NC_009328.1"/>
</dbReference>
<dbReference type="SMR" id="A4IPN4"/>
<dbReference type="KEGG" id="gtn:GTNG_1933"/>
<dbReference type="eggNOG" id="COG0014">
    <property type="taxonomic scope" value="Bacteria"/>
</dbReference>
<dbReference type="HOGENOM" id="CLU_030231_0_0_9"/>
<dbReference type="UniPathway" id="UPA00098">
    <property type="reaction ID" value="UER00360"/>
</dbReference>
<dbReference type="Proteomes" id="UP000001578">
    <property type="component" value="Chromosome"/>
</dbReference>
<dbReference type="GO" id="GO:0005737">
    <property type="term" value="C:cytoplasm"/>
    <property type="evidence" value="ECO:0007669"/>
    <property type="project" value="UniProtKB-SubCell"/>
</dbReference>
<dbReference type="GO" id="GO:0004350">
    <property type="term" value="F:glutamate-5-semialdehyde dehydrogenase activity"/>
    <property type="evidence" value="ECO:0007669"/>
    <property type="project" value="UniProtKB-UniRule"/>
</dbReference>
<dbReference type="GO" id="GO:0050661">
    <property type="term" value="F:NADP binding"/>
    <property type="evidence" value="ECO:0007669"/>
    <property type="project" value="InterPro"/>
</dbReference>
<dbReference type="GO" id="GO:0055129">
    <property type="term" value="P:L-proline biosynthetic process"/>
    <property type="evidence" value="ECO:0007669"/>
    <property type="project" value="UniProtKB-UniRule"/>
</dbReference>
<dbReference type="CDD" id="cd07079">
    <property type="entry name" value="ALDH_F18-19_ProA-GPR"/>
    <property type="match status" value="1"/>
</dbReference>
<dbReference type="FunFam" id="3.40.309.10:FF:000006">
    <property type="entry name" value="Gamma-glutamyl phosphate reductase"/>
    <property type="match status" value="1"/>
</dbReference>
<dbReference type="Gene3D" id="3.40.605.10">
    <property type="entry name" value="Aldehyde Dehydrogenase, Chain A, domain 1"/>
    <property type="match status" value="1"/>
</dbReference>
<dbReference type="Gene3D" id="3.40.309.10">
    <property type="entry name" value="Aldehyde Dehydrogenase, Chain A, domain 2"/>
    <property type="match status" value="1"/>
</dbReference>
<dbReference type="HAMAP" id="MF_00412">
    <property type="entry name" value="ProA"/>
    <property type="match status" value="1"/>
</dbReference>
<dbReference type="InterPro" id="IPR016161">
    <property type="entry name" value="Ald_DH/histidinol_DH"/>
</dbReference>
<dbReference type="InterPro" id="IPR016163">
    <property type="entry name" value="Ald_DH_C"/>
</dbReference>
<dbReference type="InterPro" id="IPR016162">
    <property type="entry name" value="Ald_DH_N"/>
</dbReference>
<dbReference type="InterPro" id="IPR015590">
    <property type="entry name" value="Aldehyde_DH_dom"/>
</dbReference>
<dbReference type="InterPro" id="IPR020593">
    <property type="entry name" value="G-glutamylP_reductase_CS"/>
</dbReference>
<dbReference type="InterPro" id="IPR012134">
    <property type="entry name" value="Glu-5-SA_DH"/>
</dbReference>
<dbReference type="InterPro" id="IPR000965">
    <property type="entry name" value="GPR_dom"/>
</dbReference>
<dbReference type="NCBIfam" id="NF001221">
    <property type="entry name" value="PRK00197.1"/>
    <property type="match status" value="1"/>
</dbReference>
<dbReference type="NCBIfam" id="TIGR00407">
    <property type="entry name" value="proA"/>
    <property type="match status" value="1"/>
</dbReference>
<dbReference type="PANTHER" id="PTHR11063:SF8">
    <property type="entry name" value="DELTA-1-PYRROLINE-5-CARBOXYLATE SYNTHASE"/>
    <property type="match status" value="1"/>
</dbReference>
<dbReference type="PANTHER" id="PTHR11063">
    <property type="entry name" value="GLUTAMATE SEMIALDEHYDE DEHYDROGENASE"/>
    <property type="match status" value="1"/>
</dbReference>
<dbReference type="Pfam" id="PF00171">
    <property type="entry name" value="Aldedh"/>
    <property type="match status" value="1"/>
</dbReference>
<dbReference type="PIRSF" id="PIRSF000151">
    <property type="entry name" value="GPR"/>
    <property type="match status" value="1"/>
</dbReference>
<dbReference type="SUPFAM" id="SSF53720">
    <property type="entry name" value="ALDH-like"/>
    <property type="match status" value="1"/>
</dbReference>
<dbReference type="PROSITE" id="PS01223">
    <property type="entry name" value="PROA"/>
    <property type="match status" value="1"/>
</dbReference>
<name>PROA_GEOTN</name>
<proteinExistence type="inferred from homology"/>
<feature type="chain" id="PRO_1000049951" description="Gamma-glutamyl phosphate reductase">
    <location>
        <begin position="1"/>
        <end position="414"/>
    </location>
</feature>
<evidence type="ECO:0000255" key="1">
    <source>
        <dbReference type="HAMAP-Rule" id="MF_00412"/>
    </source>
</evidence>